<keyword id="KW-0165">Cleavage on pair of basic residues</keyword>
<keyword id="KW-1213">G-protein coupled receptor impairing toxin</keyword>
<keyword id="KW-0964">Secreted</keyword>
<keyword id="KW-0732">Signal</keyword>
<keyword id="KW-0800">Toxin</keyword>
<keyword id="KW-0838">Vasoactive</keyword>
<keyword id="KW-0840">Vasodilator</keyword>
<name>BRKPT_AGASP</name>
<protein>
    <recommendedName>
        <fullName evidence="5">[Thr6, Val10, Asp11]-phyllokinin</fullName>
    </recommendedName>
</protein>
<comment type="function">
    <text evidence="1">Induces relaxation of rat smooth muscle from tail artery and contraction of that from ileum, urinary bladder and uterus. Binds to both bradykinin receptor B1 (BDKRB1) and B2 (BDKRB2).</text>
</comment>
<comment type="subcellular location">
    <subcellularLocation>
        <location evidence="4">Secreted</location>
    </subcellularLocation>
</comment>
<comment type="tissue specificity">
    <text evidence="7">Expressed by the skin glands.</text>
</comment>
<comment type="similarity">
    <text evidence="6">Belongs to the frog skin active peptide (FSAP) family. Bradykinin-related peptide subfamily.</text>
</comment>
<accession>A0A5Q0MUT1</accession>
<feature type="signal peptide" evidence="2">
    <location>
        <begin position="1"/>
        <end position="22"/>
    </location>
</feature>
<feature type="propeptide" id="PRO_0000449977" evidence="7">
    <location>
        <begin position="23"/>
        <end position="50"/>
    </location>
</feature>
<feature type="peptide" id="PRO_0000449978" description="[Thr6, Val10, Asp11]-phyllokinin" evidence="7">
    <location>
        <begin position="51"/>
        <end position="61"/>
    </location>
</feature>
<feature type="region of interest" description="Disordered" evidence="3">
    <location>
        <begin position="24"/>
        <end position="61"/>
    </location>
</feature>
<feature type="compositionally biased region" description="Acidic residues" evidence="3">
    <location>
        <begin position="30"/>
        <end position="42"/>
    </location>
</feature>
<evidence type="ECO:0000250" key="1">
    <source>
        <dbReference type="UniProtKB" id="L0PIN3"/>
    </source>
</evidence>
<evidence type="ECO:0000255" key="2"/>
<evidence type="ECO:0000256" key="3">
    <source>
        <dbReference type="SAM" id="MobiDB-lite"/>
    </source>
</evidence>
<evidence type="ECO:0000269" key="4">
    <source>
    </source>
</evidence>
<evidence type="ECO:0000303" key="5">
    <source>
    </source>
</evidence>
<evidence type="ECO:0000305" key="6"/>
<evidence type="ECO:0000305" key="7">
    <source>
    </source>
</evidence>
<sequence>MSFLKKSLFLVLFLGLVSFSICEEEKRETEEEENEDEMNEESEEKRESPERPPGFTPFRVD</sequence>
<organism>
    <name type="scientific">Agalychnis spurrelli</name>
    <name type="common">Gliding leaf frog</name>
    <name type="synonym">Agalychnis litodryas</name>
    <dbReference type="NCBI Taxonomy" id="317303"/>
    <lineage>
        <taxon>Eukaryota</taxon>
        <taxon>Metazoa</taxon>
        <taxon>Chordata</taxon>
        <taxon>Craniata</taxon>
        <taxon>Vertebrata</taxon>
        <taxon>Euteleostomi</taxon>
        <taxon>Amphibia</taxon>
        <taxon>Batrachia</taxon>
        <taxon>Anura</taxon>
        <taxon>Neobatrachia</taxon>
        <taxon>Hyloidea</taxon>
        <taxon>Hylidae</taxon>
        <taxon>Phyllomedusinae</taxon>
        <taxon>Agalychnis</taxon>
    </lineage>
</organism>
<proteinExistence type="evidence at protein level"/>
<reference key="1">
    <citation type="journal article" date="2019" name="Biomolecules">
        <title>Unravelling the skin secretion peptides of the gliding leaf frog, Agalychnis spurrelli (Hylidae).</title>
        <authorList>
            <person name="Proano-Bolanos C."/>
            <person name="Blasco-Zuniga A."/>
            <person name="Almeida J.R."/>
            <person name="Wang L."/>
            <person name="Llumiquinga M.A."/>
            <person name="Rivera M."/>
            <person name="Zhou M."/>
            <person name="Chen T."/>
            <person name="Shaw C."/>
        </authorList>
    </citation>
    <scope>NUCLEOTIDE SEQUENCE [MRNA]</scope>
    <scope>IDENTIFICATION BY MASS SPECTROMETRY</scope>
    <scope>SUBCELLULAR LOCATION</scope>
    <source>
        <tissue>Skin secretion</tissue>
    </source>
</reference>
<dbReference type="EMBL" id="MK766839">
    <property type="protein sequence ID" value="QFZ95565.1"/>
    <property type="molecule type" value="mRNA"/>
</dbReference>
<dbReference type="GO" id="GO:0005576">
    <property type="term" value="C:extracellular region"/>
    <property type="evidence" value="ECO:0007669"/>
    <property type="project" value="UniProtKB-SubCell"/>
</dbReference>
<dbReference type="GO" id="GO:0090729">
    <property type="term" value="F:toxin activity"/>
    <property type="evidence" value="ECO:0007669"/>
    <property type="project" value="UniProtKB-KW"/>
</dbReference>
<dbReference type="GO" id="GO:0042311">
    <property type="term" value="P:vasodilation"/>
    <property type="evidence" value="ECO:0007669"/>
    <property type="project" value="UniProtKB-KW"/>
</dbReference>
<dbReference type="InterPro" id="IPR004275">
    <property type="entry name" value="Frog_antimicrobial_propeptide"/>
</dbReference>
<dbReference type="Pfam" id="PF03032">
    <property type="entry name" value="FSAP_sig_propep"/>
    <property type="match status" value="1"/>
</dbReference>